<gene>
    <name type="primary">SOT4</name>
    <name type="ordered locus">At2g27570</name>
    <name type="ORF">F10A12</name>
</gene>
<proteinExistence type="inferred from homology"/>
<comment type="function">
    <text evidence="1">Sulfotransferase that utilizes 3'-phospho-5'-adenylyl sulfate (PAPS) as sulfonate donor.</text>
</comment>
<comment type="subcellular location">
    <subcellularLocation>
        <location evidence="1">Cytoplasm</location>
    </subcellularLocation>
</comment>
<comment type="similarity">
    <text evidence="2">Belongs to the sulfotransferase 1 family.</text>
</comment>
<evidence type="ECO:0000250" key="1"/>
<evidence type="ECO:0000305" key="2"/>
<feature type="chain" id="PRO_0000417052" description="Cytosolic sulfotransferase 4">
    <location>
        <begin position="1"/>
        <end position="273"/>
    </location>
</feature>
<feature type="active site" description="Proton acceptor" evidence="1">
    <location>
        <position position="121"/>
    </location>
</feature>
<feature type="binding site" evidence="1">
    <location>
        <begin position="74"/>
        <end position="79"/>
    </location>
    <ligand>
        <name>3'-phosphoadenylyl sulfate</name>
        <dbReference type="ChEBI" id="CHEBI:58339"/>
    </ligand>
</feature>
<feature type="binding site" evidence="1">
    <location>
        <position position="143"/>
    </location>
    <ligand>
        <name>3'-phosphoadenylyl sulfate</name>
        <dbReference type="ChEBI" id="CHEBI:58339"/>
    </ligand>
</feature>
<feature type="binding site" evidence="1">
    <location>
        <begin position="239"/>
        <end position="241"/>
    </location>
    <ligand>
        <name>3'-phosphoadenylyl sulfate</name>
        <dbReference type="ChEBI" id="CHEBI:58339"/>
    </ligand>
</feature>
<protein>
    <recommendedName>
        <fullName>Cytosolic sulfotransferase 4</fullName>
        <shortName>AtSOT4</shortName>
        <ecNumber>2.8.2.-</ecNumber>
    </recommendedName>
</protein>
<reference key="1">
    <citation type="journal article" date="1999" name="Nature">
        <title>Sequence and analysis of chromosome 2 of the plant Arabidopsis thaliana.</title>
        <authorList>
            <person name="Lin X."/>
            <person name="Kaul S."/>
            <person name="Rounsley S.D."/>
            <person name="Shea T.P."/>
            <person name="Benito M.-I."/>
            <person name="Town C.D."/>
            <person name="Fujii C.Y."/>
            <person name="Mason T.M."/>
            <person name="Bowman C.L."/>
            <person name="Barnstead M.E."/>
            <person name="Feldblyum T.V."/>
            <person name="Buell C.R."/>
            <person name="Ketchum K.A."/>
            <person name="Lee J.J."/>
            <person name="Ronning C.M."/>
            <person name="Koo H.L."/>
            <person name="Moffat K.S."/>
            <person name="Cronin L.A."/>
            <person name="Shen M."/>
            <person name="Pai G."/>
            <person name="Van Aken S."/>
            <person name="Umayam L."/>
            <person name="Tallon L.J."/>
            <person name="Gill J.E."/>
            <person name="Adams M.D."/>
            <person name="Carrera A.J."/>
            <person name="Creasy T.H."/>
            <person name="Goodman H.M."/>
            <person name="Somerville C.R."/>
            <person name="Copenhaver G.P."/>
            <person name="Preuss D."/>
            <person name="Nierman W.C."/>
            <person name="White O."/>
            <person name="Eisen J.A."/>
            <person name="Salzberg S.L."/>
            <person name="Fraser C.M."/>
            <person name="Venter J.C."/>
        </authorList>
    </citation>
    <scope>NUCLEOTIDE SEQUENCE [LARGE SCALE GENOMIC DNA]</scope>
    <source>
        <strain>cv. Columbia</strain>
    </source>
</reference>
<reference key="2">
    <citation type="journal article" date="2017" name="Plant J.">
        <title>Araport11: a complete reannotation of the Arabidopsis thaliana reference genome.</title>
        <authorList>
            <person name="Cheng C.Y."/>
            <person name="Krishnakumar V."/>
            <person name="Chan A.P."/>
            <person name="Thibaud-Nissen F."/>
            <person name="Schobel S."/>
            <person name="Town C.D."/>
        </authorList>
    </citation>
    <scope>GENOME REANNOTATION</scope>
    <source>
        <strain>cv. Columbia</strain>
    </source>
</reference>
<reference key="3">
    <citation type="journal article" date="2004" name="J. Exp. Bot.">
        <title>The multi-protein family of Arabidopsis sulphotransferases and their relatives in other plant species.</title>
        <authorList>
            <person name="Klein M."/>
            <person name="Papenbrock J."/>
        </authorList>
    </citation>
    <scope>GENE FAMILY</scope>
    <scope>NOMENCLATURE</scope>
</reference>
<dbReference type="EC" id="2.8.2.-"/>
<dbReference type="EMBL" id="AC005824">
    <property type="protein sequence ID" value="AAM15079.1"/>
    <property type="molecule type" value="Genomic_DNA"/>
</dbReference>
<dbReference type="EMBL" id="AC006232">
    <property type="protein sequence ID" value="AAM15179.1"/>
    <property type="molecule type" value="Genomic_DNA"/>
</dbReference>
<dbReference type="EMBL" id="CP002685">
    <property type="protein sequence ID" value="AEC08015.1"/>
    <property type="molecule type" value="Genomic_DNA"/>
</dbReference>
<dbReference type="RefSeq" id="NP_180325.1">
    <property type="nucleotide sequence ID" value="NM_128316.1"/>
</dbReference>
<dbReference type="SMR" id="Q8RUC1"/>
<dbReference type="FunCoup" id="Q8RUC1">
    <property type="interactions" value="37"/>
</dbReference>
<dbReference type="STRING" id="3702.Q8RUC1"/>
<dbReference type="PaxDb" id="3702-AT2G27570.1"/>
<dbReference type="ProteomicsDB" id="232603"/>
<dbReference type="EnsemblPlants" id="AT2G27570.1">
    <property type="protein sequence ID" value="AT2G27570.1"/>
    <property type="gene ID" value="AT2G27570"/>
</dbReference>
<dbReference type="GeneID" id="817303"/>
<dbReference type="Gramene" id="AT2G27570.1">
    <property type="protein sequence ID" value="AT2G27570.1"/>
    <property type="gene ID" value="AT2G27570"/>
</dbReference>
<dbReference type="KEGG" id="ath:AT2G27570"/>
<dbReference type="Araport" id="AT2G27570"/>
<dbReference type="TAIR" id="AT2G27570"/>
<dbReference type="eggNOG" id="KOG1584">
    <property type="taxonomic scope" value="Eukaryota"/>
</dbReference>
<dbReference type="HOGENOM" id="CLU_027239_0_3_1"/>
<dbReference type="InParanoid" id="Q8RUC1"/>
<dbReference type="OMA" id="GHKICEY"/>
<dbReference type="PhylomeDB" id="Q8RUC1"/>
<dbReference type="BioCyc" id="ARA:AT2G27570-MONOMER"/>
<dbReference type="PRO" id="PR:Q8RUC1"/>
<dbReference type="Proteomes" id="UP000006548">
    <property type="component" value="Chromosome 2"/>
</dbReference>
<dbReference type="ExpressionAtlas" id="Q8RUC1">
    <property type="expression patterns" value="baseline and differential"/>
</dbReference>
<dbReference type="GO" id="GO:0005737">
    <property type="term" value="C:cytoplasm"/>
    <property type="evidence" value="ECO:0007669"/>
    <property type="project" value="UniProtKB-SubCell"/>
</dbReference>
<dbReference type="GO" id="GO:0008146">
    <property type="term" value="F:sulfotransferase activity"/>
    <property type="evidence" value="ECO:0007669"/>
    <property type="project" value="InterPro"/>
</dbReference>
<dbReference type="Gene3D" id="3.40.50.300">
    <property type="entry name" value="P-loop containing nucleotide triphosphate hydrolases"/>
    <property type="match status" value="1"/>
</dbReference>
<dbReference type="InterPro" id="IPR027417">
    <property type="entry name" value="P-loop_NTPase"/>
</dbReference>
<dbReference type="InterPro" id="IPR000863">
    <property type="entry name" value="Sulfotransferase_dom"/>
</dbReference>
<dbReference type="PANTHER" id="PTHR11783">
    <property type="entry name" value="SULFOTRANSFERASE SULT"/>
    <property type="match status" value="1"/>
</dbReference>
<dbReference type="Pfam" id="PF00685">
    <property type="entry name" value="Sulfotransfer_1"/>
    <property type="match status" value="2"/>
</dbReference>
<dbReference type="SUPFAM" id="SSF52540">
    <property type="entry name" value="P-loop containing nucleoside triphosphate hydrolases"/>
    <property type="match status" value="1"/>
</dbReference>
<keyword id="KW-0963">Cytoplasm</keyword>
<keyword id="KW-1185">Reference proteome</keyword>
<keyword id="KW-0808">Transferase</keyword>
<name>SOT4_ARATH</name>
<accession>Q8RUC1</accession>
<sequence>MDDKKMAVNLRNDDLSEETKTLISSLPSDKDSTGINVCKYQGCWYTHHFLQAVLNFQKNFKPQDTNIIVASFPKCGTTWLKALTFSLVHRSKHPSHDHHHPLLSNNPHVLFSSSPRLFSTHMPSHTLQEVLKDSTCKVVYICRNMKDTLETFESFCKGVNFFGPFWDQVLSYWRRSLEDPNHVLFMRFEEMKAEPHEQIKRLAEFLDSPLLRKKKRTDCLEINKTGKLCEGRDNKTFFRKGEVGDWKNYLTPEMENKIDMIIQEKLQNSGLKF</sequence>
<organism>
    <name type="scientific">Arabidopsis thaliana</name>
    <name type="common">Mouse-ear cress</name>
    <dbReference type="NCBI Taxonomy" id="3702"/>
    <lineage>
        <taxon>Eukaryota</taxon>
        <taxon>Viridiplantae</taxon>
        <taxon>Streptophyta</taxon>
        <taxon>Embryophyta</taxon>
        <taxon>Tracheophyta</taxon>
        <taxon>Spermatophyta</taxon>
        <taxon>Magnoliopsida</taxon>
        <taxon>eudicotyledons</taxon>
        <taxon>Gunneridae</taxon>
        <taxon>Pentapetalae</taxon>
        <taxon>rosids</taxon>
        <taxon>malvids</taxon>
        <taxon>Brassicales</taxon>
        <taxon>Brassicaceae</taxon>
        <taxon>Camelineae</taxon>
        <taxon>Arabidopsis</taxon>
    </lineage>
</organism>